<gene>
    <name evidence="5" type="ordered locus">Gmet_3304</name>
</gene>
<keyword id="KW-1185">Reference proteome</keyword>
<keyword id="KW-0808">Transferase</keyword>
<dbReference type="EC" id="2.3.1.315" evidence="2"/>
<dbReference type="EMBL" id="CP000148">
    <property type="protein sequence ID" value="ABB33517.1"/>
    <property type="molecule type" value="Genomic_DNA"/>
</dbReference>
<dbReference type="RefSeq" id="WP_004512528.1">
    <property type="nucleotide sequence ID" value="NC_007517.1"/>
</dbReference>
<dbReference type="SMR" id="Q39QF7"/>
<dbReference type="STRING" id="269799.Gmet_3304"/>
<dbReference type="KEGG" id="gme:Gmet_3304"/>
<dbReference type="eggNOG" id="COG0427">
    <property type="taxonomic scope" value="Bacteria"/>
</dbReference>
<dbReference type="HOGENOM" id="CLU_030703_1_0_7"/>
<dbReference type="Proteomes" id="UP000007073">
    <property type="component" value="Chromosome"/>
</dbReference>
<dbReference type="GO" id="GO:0008775">
    <property type="term" value="F:acetate CoA-transferase activity"/>
    <property type="evidence" value="ECO:0007669"/>
    <property type="project" value="InterPro"/>
</dbReference>
<dbReference type="GO" id="GO:0006083">
    <property type="term" value="P:acetate metabolic process"/>
    <property type="evidence" value="ECO:0007669"/>
    <property type="project" value="InterPro"/>
</dbReference>
<dbReference type="Gene3D" id="3.30.750.70">
    <property type="entry name" value="4-hydroxybutyrate coenzyme like domains"/>
    <property type="match status" value="1"/>
</dbReference>
<dbReference type="Gene3D" id="3.40.1080.20">
    <property type="entry name" value="Acetyl-CoA hydrolase/transferase C-terminal domain"/>
    <property type="match status" value="1"/>
</dbReference>
<dbReference type="Gene3D" id="3.40.1080.10">
    <property type="entry name" value="Glutaconate Coenzyme A-transferase"/>
    <property type="match status" value="1"/>
</dbReference>
<dbReference type="InterPro" id="IPR026888">
    <property type="entry name" value="AcetylCoA_hyd_C"/>
</dbReference>
<dbReference type="InterPro" id="IPR038460">
    <property type="entry name" value="AcetylCoA_hyd_C_sf"/>
</dbReference>
<dbReference type="InterPro" id="IPR046433">
    <property type="entry name" value="ActCoA_hydro"/>
</dbReference>
<dbReference type="InterPro" id="IPR003702">
    <property type="entry name" value="ActCoA_hydro_N"/>
</dbReference>
<dbReference type="InterPro" id="IPR037171">
    <property type="entry name" value="NagB/RpiA_transferase-like"/>
</dbReference>
<dbReference type="PANTHER" id="PTHR21432:SF20">
    <property type="entry name" value="ACETYL-COA HYDROLASE"/>
    <property type="match status" value="1"/>
</dbReference>
<dbReference type="PANTHER" id="PTHR21432">
    <property type="entry name" value="ACETYL-COA HYDROLASE-RELATED"/>
    <property type="match status" value="1"/>
</dbReference>
<dbReference type="Pfam" id="PF13336">
    <property type="entry name" value="AcetylCoA_hyd_C"/>
    <property type="match status" value="1"/>
</dbReference>
<dbReference type="Pfam" id="PF02550">
    <property type="entry name" value="AcetylCoA_hydro"/>
    <property type="match status" value="1"/>
</dbReference>
<dbReference type="SUPFAM" id="SSF100950">
    <property type="entry name" value="NagB/RpiA/CoA transferase-like"/>
    <property type="match status" value="2"/>
</dbReference>
<reference key="1">
    <citation type="journal article" date="2009" name="BMC Microbiol.">
        <title>The genome sequence of Geobacter metallireducens: features of metabolism, physiology and regulation common and dissimilar to Geobacter sulfurreducens.</title>
        <authorList>
            <person name="Aklujkar M."/>
            <person name="Krushkal J."/>
            <person name="DiBartolo G."/>
            <person name="Lapidus A."/>
            <person name="Land M.L."/>
            <person name="Lovley D.R."/>
        </authorList>
    </citation>
    <scope>NUCLEOTIDE SEQUENCE [LARGE SCALE GENOMIC DNA]</scope>
    <source>
        <strain>ATCC 53774 / DSM 7210 / GS-15</strain>
    </source>
</reference>
<reference key="2">
    <citation type="journal article" date="2014" name="J. Bacteriol.">
        <title>Enzymes involved in a novel anaerobic cyclohexane carboxylic acid degradation pathway.</title>
        <authorList>
            <person name="Kung J.W."/>
            <person name="Meier A.K."/>
            <person name="Mergelsberg M."/>
            <person name="Boll M."/>
        </authorList>
    </citation>
    <scope>FUNCTION</scope>
    <scope>CATALYTIC ACTIVITY</scope>
    <scope>BIOPHYSICOCHEMICAL PROPERTIES</scope>
    <scope>SUBUNIT</scope>
    <source>
        <strain>ATCC 53774 / DSM 7210 / GS-15</strain>
    </source>
</reference>
<comment type="function">
    <text evidence="2">Acyl-CoA transferase involved in the anaerobic degradation of cyclohexane carboxylic acid (CHC) (PubMed:25112478). Catalyzes the activation of CHC to cyclohexane-1-carbonyl-CoA (CHCoA) (PubMed:25112478). Benzoic acid and cyclohex-1-ene-1-carboxylic acid can also be used as substrates, but with lower specific activity (PubMed:25112478). Shows highest activity with succinyl-CoA and butanoyl-coA as a CoA donor, and lower activity with crotonyl-CoA, acetyl-CoA, glutaryl-CoA, CH1eneCoA, propionyl-CoA and acetoacetyl-CoA (PubMed:25112478). In vitro, the enzyme can use butanoyl-coA as a CoA donor with greater efficiency than succinyl-CoA (PubMed:25112478). However, succinyl-CoA is the most abundant CoA ester in exponentially grown cells, whereas butanoyl-coA is hardly detectable, indicating that succinyl-CoA is the natural CoA donor for CHC activation (PubMed:25112478).</text>
</comment>
<comment type="catalytic activity">
    <reaction evidence="2">
        <text>cyclohexane-1-carboxylate + succinyl-CoA = cyclohexane-1-carbonyl-CoA + succinate</text>
        <dbReference type="Rhea" id="RHEA:79175"/>
        <dbReference type="ChEBI" id="CHEBI:27804"/>
        <dbReference type="ChEBI" id="CHEBI:30031"/>
        <dbReference type="ChEBI" id="CHEBI:57292"/>
        <dbReference type="ChEBI" id="CHEBI:76271"/>
        <dbReference type="EC" id="2.3.1.315"/>
    </reaction>
    <physiologicalReaction direction="left-to-right" evidence="2">
        <dbReference type="Rhea" id="RHEA:79176"/>
    </physiologicalReaction>
</comment>
<comment type="catalytic activity">
    <reaction evidence="2">
        <text>cyclohexane-1-carboxylate + butanoyl-CoA = cyclohexane-1-carbonyl-CoA + butanoate</text>
        <dbReference type="Rhea" id="RHEA:79179"/>
        <dbReference type="ChEBI" id="CHEBI:17968"/>
        <dbReference type="ChEBI" id="CHEBI:27804"/>
        <dbReference type="ChEBI" id="CHEBI:57371"/>
        <dbReference type="ChEBI" id="CHEBI:76271"/>
        <dbReference type="EC" id="2.3.1.315"/>
    </reaction>
    <physiologicalReaction direction="left-to-right" evidence="2">
        <dbReference type="Rhea" id="RHEA:79180"/>
    </physiologicalReaction>
</comment>
<comment type="biophysicochemical properties">
    <kinetics>
        <KM evidence="2">56 uM for cyclohexane carboxylic acid (with succinyl-CoA as CoA donor)</KM>
        <KM evidence="2">14 uM for cyclohexane carboxylic acid (with butanoyl-coA as CoA donor)</KM>
        <KM evidence="2">416 uM for benzoic acid (with succinyl-CoA as CoA donor)</KM>
        <KM evidence="2">125 uM for benzoic acid (with butanoyl-coA as CoA donor)</KM>
        <KM evidence="2">158 uM for cyclohex-1-ene-1-carboxylic acid (with succinyl-CoA as CoA donor)</KM>
        <KM evidence="2">52 uM for cyclohex-1-ene-1-carboxylic acid (with butanoyl-coA as CoA donor)</KM>
    </kinetics>
</comment>
<comment type="subunit">
    <text evidence="2">Homodimer.</text>
</comment>
<comment type="similarity">
    <text evidence="4">Belongs to the acetyl-CoA hydrolase/transferase family.</text>
</comment>
<name>SCHCT_GEOMG</name>
<feature type="chain" id="PRO_0000460711" description="Succinyl-CoA:cyclohexane-1-carboxylate CoA transferase">
    <location>
        <begin position="1"/>
        <end position="437"/>
    </location>
</feature>
<feature type="active site" description="5-glutamyl coenzyme A thioester intermediate" evidence="1">
    <location>
        <position position="244"/>
    </location>
</feature>
<feature type="binding site" evidence="1">
    <location>
        <begin position="221"/>
        <end position="225"/>
    </location>
    <ligand>
        <name>CoA</name>
        <dbReference type="ChEBI" id="CHEBI:57287"/>
    </ligand>
</feature>
<feature type="binding site" evidence="1">
    <location>
        <position position="319"/>
    </location>
    <ligand>
        <name>CoA</name>
        <dbReference type="ChEBI" id="CHEBI:57287"/>
    </ligand>
</feature>
<feature type="binding site" evidence="1">
    <location>
        <position position="342"/>
    </location>
    <ligand>
        <name>CoA</name>
        <dbReference type="ChEBI" id="CHEBI:57287"/>
    </ligand>
</feature>
<feature type="binding site" evidence="1">
    <location>
        <position position="367"/>
    </location>
    <ligand>
        <name>CoA</name>
        <dbReference type="ChEBI" id="CHEBI:57287"/>
    </ligand>
</feature>
<organism>
    <name type="scientific">Geobacter metallireducens (strain ATCC 53774 / DSM 7210 / GS-15)</name>
    <dbReference type="NCBI Taxonomy" id="269799"/>
    <lineage>
        <taxon>Bacteria</taxon>
        <taxon>Pseudomonadati</taxon>
        <taxon>Thermodesulfobacteriota</taxon>
        <taxon>Desulfuromonadia</taxon>
        <taxon>Geobacterales</taxon>
        <taxon>Geobacteraceae</taxon>
        <taxon>Geobacter</taxon>
    </lineage>
</organism>
<evidence type="ECO:0000250" key="1">
    <source>
        <dbReference type="UniProtKB" id="B3EY95"/>
    </source>
</evidence>
<evidence type="ECO:0000269" key="2">
    <source>
    </source>
</evidence>
<evidence type="ECO:0000303" key="3">
    <source>
    </source>
</evidence>
<evidence type="ECO:0000305" key="4"/>
<evidence type="ECO:0000312" key="5">
    <source>
        <dbReference type="EMBL" id="ABB33517.1"/>
    </source>
</evidence>
<accession>Q39QF7</accession>
<protein>
    <recommendedName>
        <fullName evidence="4">Succinyl-CoA:cyclohexane-1-carboxylate CoA transferase</fullName>
        <shortName evidence="3">Succinyl-CoA:CHC CoA transferase</shortName>
        <ecNumber evidence="2">2.3.1.315</ecNumber>
    </recommendedName>
    <alternativeName>
        <fullName evidence="3">CHC-activating CoA transferase</fullName>
    </alternativeName>
</protein>
<sequence length="437" mass="47911">MESVKNAKRSYEKEYRQKVCSPVEAAAVVKSGDCLCFPISVGEPTLFVRALAARRHELEGVVINQQHHLCPDYFTEDSAPHIKVNAWFTSHVSREAVQKGWADFVPNYFHEVPRLLRDYWPVDVAGTVVSPMDEHGYFTCSLSVAYTMEAIKKAKKVVVQVNPQAPRTHGNCHIHISEVDHIIECDEPLASLTIPPITPVEEAIGGYISELVEDGSCLQLGWGGIPNSVCKALLHKKDLGIHTELLSDGMVDLMLSGAVNNSRKQTHTGKTVATFALGTSRLYEFMNENPRIEMHPVDYVNYPHNIGKNDNVVSINATLEVDLLGQCCSESFGHLQYSGTGGQADFVRGSNISNGGKGFITTASTAKNGTISRIVPTLAPGASVTTGKNDVDYVVTEFGVAKLRGQTARQRAINLINIAHPDFRGELTEAARRMNRI</sequence>
<proteinExistence type="evidence at protein level"/>